<gene>
    <name evidence="1" type="primary">pyrD</name>
    <name type="ordered locus">AFE_2264</name>
</gene>
<sequence length="363" mass="38448">MSYGLLRPLLFTLDPERAHTLSIAALEALGHMPRGLARVARRYTAHDPRLAQDFWGLHFANPVGLAAGYDKDARATAALPALGFGFIEIGTVTPRPQPGNPRPRVFRYPAQQAVINRMGFPGEGAAAVARRLAALPGHPVPIGINLGKNKDTPLERAQDDYVAALELLFHYGDYLCINVSSPNTPGLRLLQGEEALRGLLKAVAAANQRLALQHQRPPLPLLLKIAPDLDNDDLNAIGSLALGTAPLVNGFIATNTTIERPASQPGLSESGGLSGAPLLQQSNAVIAQLYRATQGQVPIIGVGGILSAADAYAKILAGASLVQVYSGLIFRGPGLVREILEELPGLWLKDGYPDLAHARGSTA</sequence>
<proteinExistence type="inferred from homology"/>
<dbReference type="EC" id="1.3.5.2" evidence="1"/>
<dbReference type="EMBL" id="CP001219">
    <property type="protein sequence ID" value="ACK78794.1"/>
    <property type="molecule type" value="Genomic_DNA"/>
</dbReference>
<dbReference type="RefSeq" id="WP_012537089.1">
    <property type="nucleotide sequence ID" value="NC_011761.1"/>
</dbReference>
<dbReference type="SMR" id="B7J5Q1"/>
<dbReference type="STRING" id="243159.AFE_2264"/>
<dbReference type="PaxDb" id="243159-AFE_2264"/>
<dbReference type="GeneID" id="65281372"/>
<dbReference type="KEGG" id="afr:AFE_2264"/>
<dbReference type="eggNOG" id="COG0167">
    <property type="taxonomic scope" value="Bacteria"/>
</dbReference>
<dbReference type="HOGENOM" id="CLU_013640_2_0_6"/>
<dbReference type="UniPathway" id="UPA00070">
    <property type="reaction ID" value="UER00946"/>
</dbReference>
<dbReference type="Proteomes" id="UP000001362">
    <property type="component" value="Chromosome"/>
</dbReference>
<dbReference type="GO" id="GO:0005737">
    <property type="term" value="C:cytoplasm"/>
    <property type="evidence" value="ECO:0007669"/>
    <property type="project" value="InterPro"/>
</dbReference>
<dbReference type="GO" id="GO:0005886">
    <property type="term" value="C:plasma membrane"/>
    <property type="evidence" value="ECO:0007669"/>
    <property type="project" value="UniProtKB-SubCell"/>
</dbReference>
<dbReference type="GO" id="GO:0106430">
    <property type="term" value="F:dihydroorotate dehydrogenase (quinone) activity"/>
    <property type="evidence" value="ECO:0007669"/>
    <property type="project" value="UniProtKB-EC"/>
</dbReference>
<dbReference type="GO" id="GO:0006207">
    <property type="term" value="P:'de novo' pyrimidine nucleobase biosynthetic process"/>
    <property type="evidence" value="ECO:0007669"/>
    <property type="project" value="InterPro"/>
</dbReference>
<dbReference type="GO" id="GO:0044205">
    <property type="term" value="P:'de novo' UMP biosynthetic process"/>
    <property type="evidence" value="ECO:0007669"/>
    <property type="project" value="UniProtKB-UniRule"/>
</dbReference>
<dbReference type="CDD" id="cd04738">
    <property type="entry name" value="DHOD_2_like"/>
    <property type="match status" value="1"/>
</dbReference>
<dbReference type="Gene3D" id="3.20.20.70">
    <property type="entry name" value="Aldolase class I"/>
    <property type="match status" value="1"/>
</dbReference>
<dbReference type="HAMAP" id="MF_00225">
    <property type="entry name" value="DHO_dh_type2"/>
    <property type="match status" value="1"/>
</dbReference>
<dbReference type="InterPro" id="IPR013785">
    <property type="entry name" value="Aldolase_TIM"/>
</dbReference>
<dbReference type="InterPro" id="IPR050074">
    <property type="entry name" value="DHO_dehydrogenase"/>
</dbReference>
<dbReference type="InterPro" id="IPR005719">
    <property type="entry name" value="Dihydroorotate_DH_2"/>
</dbReference>
<dbReference type="InterPro" id="IPR005720">
    <property type="entry name" value="Dihydroorotate_DH_cat"/>
</dbReference>
<dbReference type="InterPro" id="IPR001295">
    <property type="entry name" value="Dihydroorotate_DH_CS"/>
</dbReference>
<dbReference type="NCBIfam" id="NF003645">
    <property type="entry name" value="PRK05286.1-2"/>
    <property type="match status" value="1"/>
</dbReference>
<dbReference type="NCBIfam" id="NF003652">
    <property type="entry name" value="PRK05286.2-5"/>
    <property type="match status" value="1"/>
</dbReference>
<dbReference type="NCBIfam" id="TIGR01036">
    <property type="entry name" value="pyrD_sub2"/>
    <property type="match status" value="1"/>
</dbReference>
<dbReference type="PANTHER" id="PTHR48109:SF4">
    <property type="entry name" value="DIHYDROOROTATE DEHYDROGENASE (QUINONE), MITOCHONDRIAL"/>
    <property type="match status" value="1"/>
</dbReference>
<dbReference type="PANTHER" id="PTHR48109">
    <property type="entry name" value="DIHYDROOROTATE DEHYDROGENASE (QUINONE), MITOCHONDRIAL-RELATED"/>
    <property type="match status" value="1"/>
</dbReference>
<dbReference type="Pfam" id="PF01180">
    <property type="entry name" value="DHO_dh"/>
    <property type="match status" value="1"/>
</dbReference>
<dbReference type="SUPFAM" id="SSF51395">
    <property type="entry name" value="FMN-linked oxidoreductases"/>
    <property type="match status" value="1"/>
</dbReference>
<dbReference type="PROSITE" id="PS00911">
    <property type="entry name" value="DHODEHASE_1"/>
    <property type="match status" value="1"/>
</dbReference>
<dbReference type="PROSITE" id="PS00912">
    <property type="entry name" value="DHODEHASE_2"/>
    <property type="match status" value="1"/>
</dbReference>
<keyword id="KW-1003">Cell membrane</keyword>
<keyword id="KW-0285">Flavoprotein</keyword>
<keyword id="KW-0288">FMN</keyword>
<keyword id="KW-0472">Membrane</keyword>
<keyword id="KW-0560">Oxidoreductase</keyword>
<keyword id="KW-0665">Pyrimidine biosynthesis</keyword>
<keyword id="KW-1185">Reference proteome</keyword>
<reference key="1">
    <citation type="journal article" date="2008" name="BMC Genomics">
        <title>Acidithiobacillus ferrooxidans metabolism: from genome sequence to industrial applications.</title>
        <authorList>
            <person name="Valdes J."/>
            <person name="Pedroso I."/>
            <person name="Quatrini R."/>
            <person name="Dodson R.J."/>
            <person name="Tettelin H."/>
            <person name="Blake R. II"/>
            <person name="Eisen J.A."/>
            <person name="Holmes D.S."/>
        </authorList>
    </citation>
    <scope>NUCLEOTIDE SEQUENCE [LARGE SCALE GENOMIC DNA]</scope>
    <source>
        <strain>ATCC 23270 / DSM 14882 / CIP 104768 / NCIMB 8455</strain>
    </source>
</reference>
<comment type="function">
    <text evidence="1">Catalyzes the conversion of dihydroorotate to orotate with quinone as electron acceptor.</text>
</comment>
<comment type="catalytic activity">
    <reaction evidence="1">
        <text>(S)-dihydroorotate + a quinone = orotate + a quinol</text>
        <dbReference type="Rhea" id="RHEA:30187"/>
        <dbReference type="ChEBI" id="CHEBI:24646"/>
        <dbReference type="ChEBI" id="CHEBI:30839"/>
        <dbReference type="ChEBI" id="CHEBI:30864"/>
        <dbReference type="ChEBI" id="CHEBI:132124"/>
        <dbReference type="EC" id="1.3.5.2"/>
    </reaction>
</comment>
<comment type="cofactor">
    <cofactor evidence="1">
        <name>FMN</name>
        <dbReference type="ChEBI" id="CHEBI:58210"/>
    </cofactor>
    <text evidence="1">Binds 1 FMN per subunit.</text>
</comment>
<comment type="pathway">
    <text evidence="1">Pyrimidine metabolism; UMP biosynthesis via de novo pathway; orotate from (S)-dihydroorotate (quinone route): step 1/1.</text>
</comment>
<comment type="subunit">
    <text evidence="1">Monomer.</text>
</comment>
<comment type="subcellular location">
    <subcellularLocation>
        <location evidence="1">Cell membrane</location>
        <topology evidence="1">Peripheral membrane protein</topology>
    </subcellularLocation>
</comment>
<comment type="similarity">
    <text evidence="1">Belongs to the dihydroorotate dehydrogenase family. Type 2 subfamily.</text>
</comment>
<protein>
    <recommendedName>
        <fullName evidence="1">Dihydroorotate dehydrogenase (quinone)</fullName>
        <ecNumber evidence="1">1.3.5.2</ecNumber>
    </recommendedName>
    <alternativeName>
        <fullName evidence="1">DHOdehase</fullName>
        <shortName evidence="1">DHOD</shortName>
        <shortName evidence="1">DHODase</shortName>
    </alternativeName>
    <alternativeName>
        <fullName evidence="1">Dihydroorotate oxidase</fullName>
    </alternativeName>
</protein>
<accession>B7J5Q1</accession>
<feature type="chain" id="PRO_1000195054" description="Dihydroorotate dehydrogenase (quinone)">
    <location>
        <begin position="1"/>
        <end position="363"/>
    </location>
</feature>
<feature type="active site" description="Nucleophile" evidence="1">
    <location>
        <position position="181"/>
    </location>
</feature>
<feature type="binding site" evidence="1">
    <location>
        <begin position="67"/>
        <end position="71"/>
    </location>
    <ligand>
        <name>FMN</name>
        <dbReference type="ChEBI" id="CHEBI:58210"/>
    </ligand>
</feature>
<feature type="binding site" evidence="1">
    <location>
        <position position="71"/>
    </location>
    <ligand>
        <name>substrate</name>
    </ligand>
</feature>
<feature type="binding site" evidence="1">
    <location>
        <position position="91"/>
    </location>
    <ligand>
        <name>FMN</name>
        <dbReference type="ChEBI" id="CHEBI:58210"/>
    </ligand>
</feature>
<feature type="binding site" evidence="1">
    <location>
        <begin position="116"/>
        <end position="120"/>
    </location>
    <ligand>
        <name>substrate</name>
    </ligand>
</feature>
<feature type="binding site" evidence="1">
    <location>
        <position position="145"/>
    </location>
    <ligand>
        <name>FMN</name>
        <dbReference type="ChEBI" id="CHEBI:58210"/>
    </ligand>
</feature>
<feature type="binding site" evidence="1">
    <location>
        <position position="178"/>
    </location>
    <ligand>
        <name>FMN</name>
        <dbReference type="ChEBI" id="CHEBI:58210"/>
    </ligand>
</feature>
<feature type="binding site" evidence="1">
    <location>
        <position position="178"/>
    </location>
    <ligand>
        <name>substrate</name>
    </ligand>
</feature>
<feature type="binding site" evidence="1">
    <location>
        <position position="183"/>
    </location>
    <ligand>
        <name>substrate</name>
    </ligand>
</feature>
<feature type="binding site" evidence="1">
    <location>
        <position position="224"/>
    </location>
    <ligand>
        <name>FMN</name>
        <dbReference type="ChEBI" id="CHEBI:58210"/>
    </ligand>
</feature>
<feature type="binding site" evidence="1">
    <location>
        <position position="254"/>
    </location>
    <ligand>
        <name>FMN</name>
        <dbReference type="ChEBI" id="CHEBI:58210"/>
    </ligand>
</feature>
<feature type="binding site" evidence="1">
    <location>
        <begin position="255"/>
        <end position="256"/>
    </location>
    <ligand>
        <name>substrate</name>
    </ligand>
</feature>
<feature type="binding site" evidence="1">
    <location>
        <position position="275"/>
    </location>
    <ligand>
        <name>FMN</name>
        <dbReference type="ChEBI" id="CHEBI:58210"/>
    </ligand>
</feature>
<feature type="binding site" evidence="1">
    <location>
        <position position="304"/>
    </location>
    <ligand>
        <name>FMN</name>
        <dbReference type="ChEBI" id="CHEBI:58210"/>
    </ligand>
</feature>
<feature type="binding site" evidence="1">
    <location>
        <begin position="325"/>
        <end position="326"/>
    </location>
    <ligand>
        <name>FMN</name>
        <dbReference type="ChEBI" id="CHEBI:58210"/>
    </ligand>
</feature>
<organism>
    <name type="scientific">Acidithiobacillus ferrooxidans (strain ATCC 23270 / DSM 14882 / CIP 104768 / NCIMB 8455)</name>
    <name type="common">Ferrobacillus ferrooxidans (strain ATCC 23270)</name>
    <dbReference type="NCBI Taxonomy" id="243159"/>
    <lineage>
        <taxon>Bacteria</taxon>
        <taxon>Pseudomonadati</taxon>
        <taxon>Pseudomonadota</taxon>
        <taxon>Acidithiobacillia</taxon>
        <taxon>Acidithiobacillales</taxon>
        <taxon>Acidithiobacillaceae</taxon>
        <taxon>Acidithiobacillus</taxon>
    </lineage>
</organism>
<evidence type="ECO:0000255" key="1">
    <source>
        <dbReference type="HAMAP-Rule" id="MF_00225"/>
    </source>
</evidence>
<name>PYRD_ACIF2</name>